<dbReference type="EC" id="2.1.1.33" evidence="2"/>
<dbReference type="EMBL" id="CP000350">
    <property type="protein sequence ID" value="ABJ74866.1"/>
    <property type="molecule type" value="Genomic_DNA"/>
</dbReference>
<dbReference type="RefSeq" id="WP_011671187.1">
    <property type="nucleotide sequence ID" value="NC_008510.1"/>
</dbReference>
<dbReference type="SMR" id="Q04W54"/>
<dbReference type="KEGG" id="lbj:LBJ_0122"/>
<dbReference type="HOGENOM" id="CLU_050910_2_0_12"/>
<dbReference type="UniPathway" id="UPA00989"/>
<dbReference type="Proteomes" id="UP000000656">
    <property type="component" value="Chromosome 1"/>
</dbReference>
<dbReference type="GO" id="GO:0043527">
    <property type="term" value="C:tRNA methyltransferase complex"/>
    <property type="evidence" value="ECO:0007669"/>
    <property type="project" value="TreeGrafter"/>
</dbReference>
<dbReference type="GO" id="GO:0008176">
    <property type="term" value="F:tRNA (guanine(46)-N7)-methyltransferase activity"/>
    <property type="evidence" value="ECO:0007669"/>
    <property type="project" value="UniProtKB-UniRule"/>
</dbReference>
<dbReference type="Gene3D" id="3.40.50.150">
    <property type="entry name" value="Vaccinia Virus protein VP39"/>
    <property type="match status" value="1"/>
</dbReference>
<dbReference type="HAMAP" id="MF_01057">
    <property type="entry name" value="tRNA_methyltr_TrmB"/>
    <property type="match status" value="1"/>
</dbReference>
<dbReference type="InterPro" id="IPR029063">
    <property type="entry name" value="SAM-dependent_MTases_sf"/>
</dbReference>
<dbReference type="InterPro" id="IPR003358">
    <property type="entry name" value="tRNA_(Gua-N-7)_MeTrfase_Trmb"/>
</dbReference>
<dbReference type="InterPro" id="IPR055361">
    <property type="entry name" value="tRNA_methyltr_TrmB_bact"/>
</dbReference>
<dbReference type="PANTHER" id="PTHR23417">
    <property type="entry name" value="3-DEOXY-D-MANNO-OCTULOSONIC-ACID TRANSFERASE/TRNA GUANINE-N 7 - -METHYLTRANSFERASE"/>
    <property type="match status" value="1"/>
</dbReference>
<dbReference type="PANTHER" id="PTHR23417:SF14">
    <property type="entry name" value="PENTACOTRIPEPTIDE-REPEAT REGION OF PRORP DOMAIN-CONTAINING PROTEIN"/>
    <property type="match status" value="1"/>
</dbReference>
<dbReference type="Pfam" id="PF02390">
    <property type="entry name" value="Methyltransf_4"/>
    <property type="match status" value="1"/>
</dbReference>
<dbReference type="SUPFAM" id="SSF53335">
    <property type="entry name" value="S-adenosyl-L-methionine-dependent methyltransferases"/>
    <property type="match status" value="1"/>
</dbReference>
<dbReference type="PROSITE" id="PS51625">
    <property type="entry name" value="SAM_MT_TRMB"/>
    <property type="match status" value="1"/>
</dbReference>
<feature type="chain" id="PRO_0000288169" description="tRNA (guanine-N(7)-)-methyltransferase">
    <location>
        <begin position="1"/>
        <end position="217"/>
    </location>
</feature>
<feature type="active site" evidence="1">
    <location>
        <position position="123"/>
    </location>
</feature>
<feature type="binding site" evidence="2">
    <location>
        <position position="48"/>
    </location>
    <ligand>
        <name>S-adenosyl-L-methionine</name>
        <dbReference type="ChEBI" id="CHEBI:59789"/>
    </ligand>
</feature>
<feature type="binding site" evidence="2">
    <location>
        <position position="73"/>
    </location>
    <ligand>
        <name>S-adenosyl-L-methionine</name>
        <dbReference type="ChEBI" id="CHEBI:59789"/>
    </ligand>
</feature>
<feature type="binding site" evidence="2">
    <location>
        <position position="100"/>
    </location>
    <ligand>
        <name>S-adenosyl-L-methionine</name>
        <dbReference type="ChEBI" id="CHEBI:59789"/>
    </ligand>
</feature>
<feature type="binding site" evidence="2">
    <location>
        <position position="123"/>
    </location>
    <ligand>
        <name>S-adenosyl-L-methionine</name>
        <dbReference type="ChEBI" id="CHEBI:59789"/>
    </ligand>
</feature>
<feature type="binding site" evidence="2">
    <location>
        <position position="127"/>
    </location>
    <ligand>
        <name>substrate</name>
    </ligand>
</feature>
<feature type="binding site" evidence="2">
    <location>
        <position position="159"/>
    </location>
    <ligand>
        <name>substrate</name>
    </ligand>
</feature>
<evidence type="ECO:0000250" key="1"/>
<evidence type="ECO:0000255" key="2">
    <source>
        <dbReference type="HAMAP-Rule" id="MF_01057"/>
    </source>
</evidence>
<name>TRMB_LEPBJ</name>
<keyword id="KW-0489">Methyltransferase</keyword>
<keyword id="KW-0949">S-adenosyl-L-methionine</keyword>
<keyword id="KW-0808">Transferase</keyword>
<keyword id="KW-0819">tRNA processing</keyword>
<organism>
    <name type="scientific">Leptospira borgpetersenii serovar Hardjo-bovis (strain JB197)</name>
    <dbReference type="NCBI Taxonomy" id="355277"/>
    <lineage>
        <taxon>Bacteria</taxon>
        <taxon>Pseudomonadati</taxon>
        <taxon>Spirochaetota</taxon>
        <taxon>Spirochaetia</taxon>
        <taxon>Leptospirales</taxon>
        <taxon>Leptospiraceae</taxon>
        <taxon>Leptospira</taxon>
    </lineage>
</organism>
<proteinExistence type="inferred from homology"/>
<reference key="1">
    <citation type="journal article" date="2006" name="Proc. Natl. Acad. Sci. U.S.A.">
        <title>Genome reduction in Leptospira borgpetersenii reflects limited transmission potential.</title>
        <authorList>
            <person name="Bulach D.M."/>
            <person name="Zuerner R.L."/>
            <person name="Wilson P."/>
            <person name="Seemann T."/>
            <person name="McGrath A."/>
            <person name="Cullen P.A."/>
            <person name="Davis J."/>
            <person name="Johnson M."/>
            <person name="Kuczek E."/>
            <person name="Alt D.P."/>
            <person name="Peterson-Burch B."/>
            <person name="Coppel R.L."/>
            <person name="Rood J.I."/>
            <person name="Davies J.K."/>
            <person name="Adler B."/>
        </authorList>
    </citation>
    <scope>NUCLEOTIDE SEQUENCE [LARGE SCALE GENOMIC DNA]</scope>
    <source>
        <strain>JB197</strain>
    </source>
</reference>
<sequence>MSQDLEQKLWSIASGIPFVSDYFLQASPARKLKKENLFSKVFETYFLELGSGWGEVAIAMALQRRNTGFVLMEKKFDRIRHTIREIEKHSLDNVKILCVNFNWFLADVFEENLFSEILLNFPDPWPKKRHHKKRTINSKFIESLRVLLPEKGKFSFATDYGPYARKTIRLFRDSEIFKPETMEFRLERKEIPVSHFERKKRKEGKRIYYIDQILIRK</sequence>
<comment type="function">
    <text evidence="2">Catalyzes the formation of N(7)-methylguanine at position 46 (m7G46) in tRNA.</text>
</comment>
<comment type="catalytic activity">
    <reaction evidence="2">
        <text>guanosine(46) in tRNA + S-adenosyl-L-methionine = N(7)-methylguanosine(46) in tRNA + S-adenosyl-L-homocysteine</text>
        <dbReference type="Rhea" id="RHEA:42708"/>
        <dbReference type="Rhea" id="RHEA-COMP:10188"/>
        <dbReference type="Rhea" id="RHEA-COMP:10189"/>
        <dbReference type="ChEBI" id="CHEBI:57856"/>
        <dbReference type="ChEBI" id="CHEBI:59789"/>
        <dbReference type="ChEBI" id="CHEBI:74269"/>
        <dbReference type="ChEBI" id="CHEBI:74480"/>
        <dbReference type="EC" id="2.1.1.33"/>
    </reaction>
</comment>
<comment type="pathway">
    <text evidence="2">tRNA modification; N(7)-methylguanine-tRNA biosynthesis.</text>
</comment>
<comment type="similarity">
    <text evidence="2">Belongs to the class I-like SAM-binding methyltransferase superfamily. TrmB family.</text>
</comment>
<accession>Q04W54</accession>
<protein>
    <recommendedName>
        <fullName evidence="2">tRNA (guanine-N(7)-)-methyltransferase</fullName>
        <ecNumber evidence="2">2.1.1.33</ecNumber>
    </recommendedName>
    <alternativeName>
        <fullName evidence="2">tRNA (guanine(46)-N(7))-methyltransferase</fullName>
    </alternativeName>
    <alternativeName>
        <fullName evidence="2">tRNA(m7G46)-methyltransferase</fullName>
    </alternativeName>
</protein>
<gene>
    <name evidence="2" type="primary">trmB</name>
    <name type="ordered locus">LBJ_0122</name>
</gene>